<protein>
    <recommendedName>
        <fullName>Thymosin beta-12</fullName>
    </recommendedName>
</protein>
<organism>
    <name type="scientific">Oncorhynchus mykiss</name>
    <name type="common">Rainbow trout</name>
    <name type="synonym">Salmo gairdneri</name>
    <dbReference type="NCBI Taxonomy" id="8022"/>
    <lineage>
        <taxon>Eukaryota</taxon>
        <taxon>Metazoa</taxon>
        <taxon>Chordata</taxon>
        <taxon>Craniata</taxon>
        <taxon>Vertebrata</taxon>
        <taxon>Euteleostomi</taxon>
        <taxon>Actinopterygii</taxon>
        <taxon>Neopterygii</taxon>
        <taxon>Teleostei</taxon>
        <taxon>Protacanthopterygii</taxon>
        <taxon>Salmoniformes</taxon>
        <taxon>Salmonidae</taxon>
        <taxon>Salmoninae</taxon>
        <taxon>Oncorhynchus</taxon>
    </lineage>
</organism>
<keyword id="KW-0007">Acetylation</keyword>
<keyword id="KW-0009">Actin-binding</keyword>
<keyword id="KW-0963">Cytoplasm</keyword>
<keyword id="KW-0206">Cytoskeleton</keyword>
<keyword id="KW-0903">Direct protein sequencing</keyword>
<feature type="initiator methionine" description="Removed" evidence="3">
    <location>
        <position position="1"/>
    </location>
</feature>
<feature type="chain" id="PRO_0000045940" description="Thymosin beta-12">
    <location>
        <begin position="2"/>
        <end position="43"/>
    </location>
</feature>
<feature type="region of interest" description="Disordered" evidence="2">
    <location>
        <begin position="1"/>
        <end position="43"/>
    </location>
</feature>
<feature type="compositionally biased region" description="Basic and acidic residues" evidence="2">
    <location>
        <begin position="1"/>
        <end position="25"/>
    </location>
</feature>
<feature type="compositionally biased region" description="Basic and acidic residues" evidence="2">
    <location>
        <begin position="33"/>
        <end position="43"/>
    </location>
</feature>
<feature type="modified residue" description="N-acetylserine" evidence="3">
    <location>
        <position position="2"/>
    </location>
</feature>
<sequence>MSDKPDLAEVSNFDKTKLKKTETQEKNPLPTKETIEQEKQATA</sequence>
<proteinExistence type="evidence at protein level"/>
<dbReference type="RefSeq" id="XP_021434612.1">
    <property type="nucleotide sequence ID" value="XM_021578937.2"/>
</dbReference>
<dbReference type="SMR" id="P26352"/>
<dbReference type="iPTMnet" id="P26352"/>
<dbReference type="Ensembl" id="ENSOMYT00000066307.2">
    <property type="protein sequence ID" value="ENSOMYP00000060905.1"/>
    <property type="gene ID" value="ENSOMYG00000028165.2"/>
</dbReference>
<dbReference type="GeneID" id="118936315"/>
<dbReference type="GeneTree" id="ENSGT00980000198599"/>
<dbReference type="Proteomes" id="UP000694395">
    <property type="component" value="Chromosome 3"/>
</dbReference>
<dbReference type="GO" id="GO:0005737">
    <property type="term" value="C:cytoplasm"/>
    <property type="evidence" value="ECO:0007669"/>
    <property type="project" value="UniProtKB-KW"/>
</dbReference>
<dbReference type="GO" id="GO:0005856">
    <property type="term" value="C:cytoskeleton"/>
    <property type="evidence" value="ECO:0007669"/>
    <property type="project" value="UniProtKB-SubCell"/>
</dbReference>
<dbReference type="GO" id="GO:0003785">
    <property type="term" value="F:actin monomer binding"/>
    <property type="evidence" value="ECO:0007669"/>
    <property type="project" value="InterPro"/>
</dbReference>
<dbReference type="GO" id="GO:0007015">
    <property type="term" value="P:actin filament organization"/>
    <property type="evidence" value="ECO:0007669"/>
    <property type="project" value="InterPro"/>
</dbReference>
<dbReference type="GO" id="GO:0030334">
    <property type="term" value="P:regulation of cell migration"/>
    <property type="evidence" value="ECO:0007669"/>
    <property type="project" value="TreeGrafter"/>
</dbReference>
<dbReference type="FunFam" id="1.20.5.520:FF:000001">
    <property type="entry name" value="Thymosin beta"/>
    <property type="match status" value="1"/>
</dbReference>
<dbReference type="Gene3D" id="1.20.5.520">
    <property type="entry name" value="Single helix bin"/>
    <property type="match status" value="1"/>
</dbReference>
<dbReference type="InterPro" id="IPR001152">
    <property type="entry name" value="Beta-thymosin"/>
</dbReference>
<dbReference type="InterPro" id="IPR038386">
    <property type="entry name" value="Beta-thymosin_sf"/>
</dbReference>
<dbReference type="PANTHER" id="PTHR12021">
    <property type="entry name" value="THYMOSIN BETA"/>
    <property type="match status" value="1"/>
</dbReference>
<dbReference type="PANTHER" id="PTHR12021:SF3">
    <property type="entry name" value="THYMOSIN BETA-4-LIKE"/>
    <property type="match status" value="1"/>
</dbReference>
<dbReference type="Pfam" id="PF01290">
    <property type="entry name" value="Thymosin"/>
    <property type="match status" value="1"/>
</dbReference>
<dbReference type="PIRSF" id="PIRSF001828">
    <property type="entry name" value="Thymosin_beta"/>
    <property type="match status" value="1"/>
</dbReference>
<dbReference type="SMART" id="SM00152">
    <property type="entry name" value="THY"/>
    <property type="match status" value="1"/>
</dbReference>
<dbReference type="PROSITE" id="PS00500">
    <property type="entry name" value="THYMOSIN_B4"/>
    <property type="match status" value="1"/>
</dbReference>
<comment type="function">
    <text evidence="1">Plays an important role in the organization of the cytoskeleton. Binds to and sequesters actin monomers (G actin) and therefore inhibits actin polymerization (By similarity).</text>
</comment>
<comment type="subcellular location">
    <subcellularLocation>
        <location>Cytoplasm</location>
        <location>Cytoskeleton</location>
    </subcellularLocation>
</comment>
<comment type="similarity">
    <text evidence="4">Belongs to the thymosin beta family.</text>
</comment>
<evidence type="ECO:0000250" key="1"/>
<evidence type="ECO:0000256" key="2">
    <source>
        <dbReference type="SAM" id="MobiDB-lite"/>
    </source>
</evidence>
<evidence type="ECO:0000269" key="3">
    <source>
    </source>
</evidence>
<evidence type="ECO:0000305" key="4"/>
<accession>P26352</accession>
<reference key="1">
    <citation type="journal article" date="1992" name="Biochem. J.">
        <title>The complete sequences of trout (Salmo gairdneri) thymosin beta 11 and its homologue thymosin beta 12.</title>
        <authorList>
            <person name="Yialouris P.P."/>
            <person name="Coles B."/>
            <person name="Tsitsiloni O."/>
            <person name="Schmid B."/>
            <person name="Howell S."/>
            <person name="Aitken A."/>
            <person name="Voelter W."/>
            <person name="Haritos A.A."/>
        </authorList>
    </citation>
    <scope>PROTEIN SEQUENCE OF 2-43</scope>
    <scope>ACETYLATION AT SER-2</scope>
    <source>
        <tissue>Spleen</tissue>
    </source>
</reference>
<reference key="2">
    <citation type="book" date="1993" name="Peptides 1992">
        <title>Structure and syntheses of thymosin beta-11 and beta-12.</title>
        <editorList>
            <person name="Schneider C.H."/>
            <person name="Eberles A.N."/>
        </editorList>
        <authorList>
            <person name="Echner H."/>
            <person name="Yialouris P.P."/>
            <person name="Haritos A.A."/>
            <person name="Gruebler G."/>
            <person name="Voelter W."/>
        </authorList>
    </citation>
    <scope>SYNTHESIS OF 2-43</scope>
</reference>
<name>TYB12_ONCMY</name>